<accession>O84792</accession>
<evidence type="ECO:0000255" key="1">
    <source>
        <dbReference type="HAMAP-Rule" id="MF_00537"/>
    </source>
</evidence>
<evidence type="ECO:0000305" key="2"/>
<comment type="function">
    <text evidence="1">Binds 16S rRNA, required for the assembly of 30S particles and may also be responsible for determining the conformation of the 16S rRNA at the A site.</text>
</comment>
<comment type="subunit">
    <text evidence="1">Part of the 30S ribosomal subunit. Contacts proteins S3 and S10.</text>
</comment>
<comment type="similarity">
    <text evidence="1">Belongs to the universal ribosomal protein uS14 family.</text>
</comment>
<feature type="chain" id="PRO_0000130886" description="Small ribosomal subunit protein uS14">
    <location>
        <begin position="1"/>
        <end position="101"/>
    </location>
</feature>
<organism>
    <name type="scientific">Chlamydia trachomatis serovar D (strain ATCC VR-885 / DSM 19411 / UW-3/Cx)</name>
    <dbReference type="NCBI Taxonomy" id="272561"/>
    <lineage>
        <taxon>Bacteria</taxon>
        <taxon>Pseudomonadati</taxon>
        <taxon>Chlamydiota</taxon>
        <taxon>Chlamydiia</taxon>
        <taxon>Chlamydiales</taxon>
        <taxon>Chlamydiaceae</taxon>
        <taxon>Chlamydia/Chlamydophila group</taxon>
        <taxon>Chlamydia</taxon>
    </lineage>
</organism>
<keyword id="KW-1185">Reference proteome</keyword>
<keyword id="KW-0687">Ribonucleoprotein</keyword>
<keyword id="KW-0689">Ribosomal protein</keyword>
<keyword id="KW-0694">RNA-binding</keyword>
<keyword id="KW-0699">rRNA-binding</keyword>
<dbReference type="EMBL" id="AE001273">
    <property type="protein sequence ID" value="AAC68382.1"/>
    <property type="molecule type" value="Genomic_DNA"/>
</dbReference>
<dbReference type="PIR" id="G71470">
    <property type="entry name" value="G71470"/>
</dbReference>
<dbReference type="RefSeq" id="NP_220306.1">
    <property type="nucleotide sequence ID" value="NC_000117.1"/>
</dbReference>
<dbReference type="RefSeq" id="WP_009872167.1">
    <property type="nucleotide sequence ID" value="NC_000117.1"/>
</dbReference>
<dbReference type="SMR" id="O84792"/>
<dbReference type="FunCoup" id="O84792">
    <property type="interactions" value="194"/>
</dbReference>
<dbReference type="STRING" id="272561.CT_787"/>
<dbReference type="EnsemblBacteria" id="AAC68382">
    <property type="protein sequence ID" value="AAC68382"/>
    <property type="gene ID" value="CT_787"/>
</dbReference>
<dbReference type="GeneID" id="884584"/>
<dbReference type="KEGG" id="ctr:CT_787"/>
<dbReference type="PATRIC" id="fig|272561.5.peg.865"/>
<dbReference type="HOGENOM" id="CLU_139869_0_1_0"/>
<dbReference type="InParanoid" id="O84792"/>
<dbReference type="OrthoDB" id="9810484at2"/>
<dbReference type="Proteomes" id="UP000000431">
    <property type="component" value="Chromosome"/>
</dbReference>
<dbReference type="GO" id="GO:0005737">
    <property type="term" value="C:cytoplasm"/>
    <property type="evidence" value="ECO:0007669"/>
    <property type="project" value="UniProtKB-ARBA"/>
</dbReference>
<dbReference type="GO" id="GO:0015935">
    <property type="term" value="C:small ribosomal subunit"/>
    <property type="evidence" value="ECO:0000318"/>
    <property type="project" value="GO_Central"/>
</dbReference>
<dbReference type="GO" id="GO:0019843">
    <property type="term" value="F:rRNA binding"/>
    <property type="evidence" value="ECO:0007669"/>
    <property type="project" value="UniProtKB-UniRule"/>
</dbReference>
<dbReference type="GO" id="GO:0003735">
    <property type="term" value="F:structural constituent of ribosome"/>
    <property type="evidence" value="ECO:0000318"/>
    <property type="project" value="GO_Central"/>
</dbReference>
<dbReference type="GO" id="GO:0006412">
    <property type="term" value="P:translation"/>
    <property type="evidence" value="ECO:0000318"/>
    <property type="project" value="GO_Central"/>
</dbReference>
<dbReference type="FunFam" id="1.10.287.1480:FF:000001">
    <property type="entry name" value="30S ribosomal protein S14"/>
    <property type="match status" value="1"/>
</dbReference>
<dbReference type="Gene3D" id="1.10.287.1480">
    <property type="match status" value="1"/>
</dbReference>
<dbReference type="HAMAP" id="MF_00537">
    <property type="entry name" value="Ribosomal_uS14_1"/>
    <property type="match status" value="1"/>
</dbReference>
<dbReference type="InterPro" id="IPR001209">
    <property type="entry name" value="Ribosomal_uS14"/>
</dbReference>
<dbReference type="InterPro" id="IPR023036">
    <property type="entry name" value="Ribosomal_uS14_bac/plastid"/>
</dbReference>
<dbReference type="InterPro" id="IPR018271">
    <property type="entry name" value="Ribosomal_uS14_CS"/>
</dbReference>
<dbReference type="NCBIfam" id="NF006477">
    <property type="entry name" value="PRK08881.1"/>
    <property type="match status" value="1"/>
</dbReference>
<dbReference type="PANTHER" id="PTHR19836">
    <property type="entry name" value="30S RIBOSOMAL PROTEIN S14"/>
    <property type="match status" value="1"/>
</dbReference>
<dbReference type="PANTHER" id="PTHR19836:SF19">
    <property type="entry name" value="SMALL RIBOSOMAL SUBUNIT PROTEIN US14M"/>
    <property type="match status" value="1"/>
</dbReference>
<dbReference type="Pfam" id="PF00253">
    <property type="entry name" value="Ribosomal_S14"/>
    <property type="match status" value="1"/>
</dbReference>
<dbReference type="SUPFAM" id="SSF57716">
    <property type="entry name" value="Glucocorticoid receptor-like (DNA-binding domain)"/>
    <property type="match status" value="1"/>
</dbReference>
<dbReference type="PROSITE" id="PS00527">
    <property type="entry name" value="RIBOSOMAL_S14"/>
    <property type="match status" value="1"/>
</dbReference>
<gene>
    <name evidence="1" type="primary">rpsN</name>
    <name type="synonym">rs14</name>
    <name type="ordered locus">CT_787</name>
</gene>
<proteinExistence type="inferred from homology"/>
<protein>
    <recommendedName>
        <fullName evidence="1">Small ribosomal subunit protein uS14</fullName>
    </recommendedName>
    <alternativeName>
        <fullName evidence="2">30S ribosomal protein S14</fullName>
    </alternativeName>
</protein>
<reference key="1">
    <citation type="journal article" date="1998" name="Science">
        <title>Genome sequence of an obligate intracellular pathogen of humans: Chlamydia trachomatis.</title>
        <authorList>
            <person name="Stephens R.S."/>
            <person name="Kalman S."/>
            <person name="Lammel C.J."/>
            <person name="Fan J."/>
            <person name="Marathe R."/>
            <person name="Aravind L."/>
            <person name="Mitchell W.P."/>
            <person name="Olinger L."/>
            <person name="Tatusov R.L."/>
            <person name="Zhao Q."/>
            <person name="Koonin E.V."/>
            <person name="Davis R.W."/>
        </authorList>
    </citation>
    <scope>NUCLEOTIDE SEQUENCE [LARGE SCALE GENOMIC DNA]</scope>
    <source>
        <strain>ATCC VR-885 / DSM 19411 / UW-3/Cx</strain>
    </source>
</reference>
<sequence>MAKKSAVAREVKRRKLVEANFQKRAELRKLAKSLSVSEEERERAREALNKMRRDTSPSRLHNRCLLTGRPRGYLRKFAISRICFRQMASMGDIPGVVKASW</sequence>
<name>RS14_CHLTR</name>